<accession>Q96DG6</accession>
<accession>D3DTC7</accession>
<accession>Q8TED6</accession>
<reference key="1">
    <citation type="submission" date="2000-05" db="EMBL/GenBank/DDBJ databases">
        <title>Full length sequencing of some human and murine muscular transcripts (Telethon Italy project B41).</title>
        <authorList>
            <person name="Ievolella C."/>
            <person name="Zara I."/>
            <person name="Millino C."/>
            <person name="Faulkner G."/>
            <person name="Lanfranchi G."/>
        </authorList>
    </citation>
    <scope>NUCLEOTIDE SEQUENCE [LARGE SCALE MRNA]</scope>
    <source>
        <tissue>Skeletal muscle</tissue>
    </source>
</reference>
<reference key="2">
    <citation type="journal article" date="2004" name="Nat. Genet.">
        <title>Complete sequencing and characterization of 21,243 full-length human cDNAs.</title>
        <authorList>
            <person name="Ota T."/>
            <person name="Suzuki Y."/>
            <person name="Nishikawa T."/>
            <person name="Otsuki T."/>
            <person name="Sugiyama T."/>
            <person name="Irie R."/>
            <person name="Wakamatsu A."/>
            <person name="Hayashi K."/>
            <person name="Sato H."/>
            <person name="Nagai K."/>
            <person name="Kimura K."/>
            <person name="Makita H."/>
            <person name="Sekine M."/>
            <person name="Obayashi M."/>
            <person name="Nishi T."/>
            <person name="Shibahara T."/>
            <person name="Tanaka T."/>
            <person name="Ishii S."/>
            <person name="Yamamoto J."/>
            <person name="Saito K."/>
            <person name="Kawai Y."/>
            <person name="Isono Y."/>
            <person name="Nakamura Y."/>
            <person name="Nagahari K."/>
            <person name="Murakami K."/>
            <person name="Yasuda T."/>
            <person name="Iwayanagi T."/>
            <person name="Wagatsuma M."/>
            <person name="Shiratori A."/>
            <person name="Sudo H."/>
            <person name="Hosoiri T."/>
            <person name="Kaku Y."/>
            <person name="Kodaira H."/>
            <person name="Kondo H."/>
            <person name="Sugawara M."/>
            <person name="Takahashi M."/>
            <person name="Kanda K."/>
            <person name="Yokoi T."/>
            <person name="Furuya T."/>
            <person name="Kikkawa E."/>
            <person name="Omura Y."/>
            <person name="Abe K."/>
            <person name="Kamihara K."/>
            <person name="Katsuta N."/>
            <person name="Sato K."/>
            <person name="Tanikawa M."/>
            <person name="Yamazaki M."/>
            <person name="Ninomiya K."/>
            <person name="Ishibashi T."/>
            <person name="Yamashita H."/>
            <person name="Murakawa K."/>
            <person name="Fujimori K."/>
            <person name="Tanai H."/>
            <person name="Kimata M."/>
            <person name="Watanabe M."/>
            <person name="Hiraoka S."/>
            <person name="Chiba Y."/>
            <person name="Ishida S."/>
            <person name="Ono Y."/>
            <person name="Takiguchi S."/>
            <person name="Watanabe S."/>
            <person name="Yosida M."/>
            <person name="Hotuta T."/>
            <person name="Kusano J."/>
            <person name="Kanehori K."/>
            <person name="Takahashi-Fujii A."/>
            <person name="Hara H."/>
            <person name="Tanase T.-O."/>
            <person name="Nomura Y."/>
            <person name="Togiya S."/>
            <person name="Komai F."/>
            <person name="Hara R."/>
            <person name="Takeuchi K."/>
            <person name="Arita M."/>
            <person name="Imose N."/>
            <person name="Musashino K."/>
            <person name="Yuuki H."/>
            <person name="Oshima A."/>
            <person name="Sasaki N."/>
            <person name="Aotsuka S."/>
            <person name="Yoshikawa Y."/>
            <person name="Matsunawa H."/>
            <person name="Ichihara T."/>
            <person name="Shiohata N."/>
            <person name="Sano S."/>
            <person name="Moriya S."/>
            <person name="Momiyama H."/>
            <person name="Satoh N."/>
            <person name="Takami S."/>
            <person name="Terashima Y."/>
            <person name="Suzuki O."/>
            <person name="Nakagawa S."/>
            <person name="Senoh A."/>
            <person name="Mizoguchi H."/>
            <person name="Goto Y."/>
            <person name="Shimizu F."/>
            <person name="Wakebe H."/>
            <person name="Hishigaki H."/>
            <person name="Watanabe T."/>
            <person name="Sugiyama A."/>
            <person name="Takemoto M."/>
            <person name="Kawakami B."/>
            <person name="Yamazaki M."/>
            <person name="Watanabe K."/>
            <person name="Kumagai A."/>
            <person name="Itakura S."/>
            <person name="Fukuzumi Y."/>
            <person name="Fujimori Y."/>
            <person name="Komiyama M."/>
            <person name="Tashiro H."/>
            <person name="Tanigami A."/>
            <person name="Fujiwara T."/>
            <person name="Ono T."/>
            <person name="Yamada K."/>
            <person name="Fujii Y."/>
            <person name="Ozaki K."/>
            <person name="Hirao M."/>
            <person name="Ohmori Y."/>
            <person name="Kawabata A."/>
            <person name="Hikiji T."/>
            <person name="Kobatake N."/>
            <person name="Inagaki H."/>
            <person name="Ikema Y."/>
            <person name="Okamoto S."/>
            <person name="Okitani R."/>
            <person name="Kawakami T."/>
            <person name="Noguchi S."/>
            <person name="Itoh T."/>
            <person name="Shigeta K."/>
            <person name="Senba T."/>
            <person name="Matsumura K."/>
            <person name="Nakajima Y."/>
            <person name="Mizuno T."/>
            <person name="Morinaga M."/>
            <person name="Sasaki M."/>
            <person name="Togashi T."/>
            <person name="Oyama M."/>
            <person name="Hata H."/>
            <person name="Watanabe M."/>
            <person name="Komatsu T."/>
            <person name="Mizushima-Sugano J."/>
            <person name="Satoh T."/>
            <person name="Shirai Y."/>
            <person name="Takahashi Y."/>
            <person name="Nakagawa K."/>
            <person name="Okumura K."/>
            <person name="Nagase T."/>
            <person name="Nomura N."/>
            <person name="Kikuchi H."/>
            <person name="Masuho Y."/>
            <person name="Yamashita R."/>
            <person name="Nakai K."/>
            <person name="Yada T."/>
            <person name="Nakamura Y."/>
            <person name="Ohara O."/>
            <person name="Isogai T."/>
            <person name="Sugano S."/>
        </authorList>
    </citation>
    <scope>NUCLEOTIDE SEQUENCE [LARGE SCALE MRNA]</scope>
    <source>
        <tissue>Adipose tissue</tissue>
    </source>
</reference>
<reference key="3">
    <citation type="submission" date="2005-09" db="EMBL/GenBank/DDBJ databases">
        <authorList>
            <person name="Mural R.J."/>
            <person name="Istrail S."/>
            <person name="Sutton G.G."/>
            <person name="Florea L."/>
            <person name="Halpern A.L."/>
            <person name="Mobarry C.M."/>
            <person name="Lippert R."/>
            <person name="Walenz B."/>
            <person name="Shatkay H."/>
            <person name="Dew I."/>
            <person name="Miller J.R."/>
            <person name="Flanigan M.J."/>
            <person name="Edwards N.J."/>
            <person name="Bolanos R."/>
            <person name="Fasulo D."/>
            <person name="Halldorsson B.V."/>
            <person name="Hannenhalli S."/>
            <person name="Turner R."/>
            <person name="Yooseph S."/>
            <person name="Lu F."/>
            <person name="Nusskern D.R."/>
            <person name="Shue B.C."/>
            <person name="Zheng X.H."/>
            <person name="Zhong F."/>
            <person name="Delcher A.L."/>
            <person name="Huson D.H."/>
            <person name="Kravitz S.A."/>
            <person name="Mouchard L."/>
            <person name="Reinert K."/>
            <person name="Remington K.A."/>
            <person name="Clark A.G."/>
            <person name="Waterman M.S."/>
            <person name="Eichler E.E."/>
            <person name="Adams M.D."/>
            <person name="Hunkapiller M.W."/>
            <person name="Myers E.W."/>
            <person name="Venter J.C."/>
        </authorList>
    </citation>
    <scope>NUCLEOTIDE SEQUENCE [LARGE SCALE GENOMIC DNA]</scope>
</reference>
<reference key="4">
    <citation type="journal article" date="2004" name="Genome Res.">
        <title>The status, quality, and expansion of the NIH full-length cDNA project: the Mammalian Gene Collection (MGC).</title>
        <authorList>
            <consortium name="The MGC Project Team"/>
        </authorList>
    </citation>
    <scope>NUCLEOTIDE SEQUENCE [LARGE SCALE MRNA]</scope>
    <source>
        <tissue>Placenta</tissue>
    </source>
</reference>
<reference key="5">
    <citation type="submission" date="2008-03" db="UniProtKB">
        <authorList>
            <person name="Bienvenut W.V."/>
            <person name="Calvo F."/>
            <person name="Kolch W."/>
        </authorList>
    </citation>
    <scope>PROTEIN SEQUENCE OF 2-31; 150-168; 206-217 AND 236-245</scope>
    <scope>CLEAVAGE OF INITIATOR METHIONINE</scope>
    <scope>ACETYLATION AT ALA-2</scope>
    <scope>IDENTIFICATION BY MASS SPECTROMETRY</scope>
    <source>
        <tissue>Cervix carcinoma</tissue>
    </source>
</reference>
<reference key="6">
    <citation type="journal article" date="2009" name="Science">
        <title>Lysine acetylation targets protein complexes and co-regulates major cellular functions.</title>
        <authorList>
            <person name="Choudhary C."/>
            <person name="Kumar C."/>
            <person name="Gnad F."/>
            <person name="Nielsen M.L."/>
            <person name="Rehman M."/>
            <person name="Walther T.C."/>
            <person name="Olsen J.V."/>
            <person name="Mann M."/>
        </authorList>
    </citation>
    <scope>ACETYLATION [LARGE SCALE ANALYSIS] AT LYS-36</scope>
    <scope>IDENTIFICATION BY MASS SPECTROMETRY [LARGE SCALE ANALYSIS]</scope>
</reference>
<reference key="7">
    <citation type="journal article" date="2010" name="J. Biol. Chem.">
        <title>Human carboxymethylenebutenolidase as a bioactivating hydrolase of olmesartan medoxomil in liver and intestine.</title>
        <authorList>
            <person name="Ishizuka T."/>
            <person name="Fujimori I."/>
            <person name="Kato M."/>
            <person name="Noji-Sakikawa C."/>
            <person name="Saito M."/>
            <person name="Yoshigae Y."/>
            <person name="Kubota K."/>
            <person name="Kurihara A."/>
            <person name="Izumi T."/>
            <person name="Ikeda T."/>
            <person name="Okazaki O."/>
        </authorList>
    </citation>
    <scope>FUNCTION</scope>
    <scope>TISSUE SPECIFICITY</scope>
    <scope>SUBCELLULAR LOCATION</scope>
    <scope>BIOPHYSICOCHEMICAL PROPERTIES</scope>
    <scope>MUTAGENESIS OF CYS-132</scope>
    <scope>IDENTIFICATION BY MASS SPECTROMETRY</scope>
</reference>
<reference key="8">
    <citation type="journal article" date="2011" name="BMC Syst. Biol.">
        <title>Initial characterization of the human central proteome.</title>
        <authorList>
            <person name="Burkard T.R."/>
            <person name="Planyavsky M."/>
            <person name="Kaupe I."/>
            <person name="Breitwieser F.P."/>
            <person name="Buerckstuemmer T."/>
            <person name="Bennett K.L."/>
            <person name="Superti-Furga G."/>
            <person name="Colinge J."/>
        </authorList>
    </citation>
    <scope>IDENTIFICATION BY MASS SPECTROMETRY [LARGE SCALE ANALYSIS]</scope>
</reference>
<reference key="9">
    <citation type="journal article" date="2013" name="J. Proteome Res.">
        <title>Toward a comprehensive characterization of a human cancer cell phosphoproteome.</title>
        <authorList>
            <person name="Zhou H."/>
            <person name="Di Palma S."/>
            <person name="Preisinger C."/>
            <person name="Peng M."/>
            <person name="Polat A.N."/>
            <person name="Heck A.J."/>
            <person name="Mohammed S."/>
        </authorList>
    </citation>
    <scope>IDENTIFICATION BY MASS SPECTROMETRY [LARGE SCALE ANALYSIS]</scope>
    <source>
        <tissue>Erythroleukemia</tissue>
    </source>
</reference>
<reference key="10">
    <citation type="journal article" date="2014" name="J. Proteomics">
        <title>An enzyme assisted RP-RPLC approach for in-depth analysis of human liver phosphoproteome.</title>
        <authorList>
            <person name="Bian Y."/>
            <person name="Song C."/>
            <person name="Cheng K."/>
            <person name="Dong M."/>
            <person name="Wang F."/>
            <person name="Huang J."/>
            <person name="Sun D."/>
            <person name="Wang L."/>
            <person name="Ye M."/>
            <person name="Zou H."/>
        </authorList>
    </citation>
    <scope>PHOSPHORYLATION [LARGE SCALE ANALYSIS] AT SER-223</scope>
    <scope>IDENTIFICATION BY MASS SPECTROMETRY [LARGE SCALE ANALYSIS]</scope>
    <source>
        <tissue>Liver</tissue>
    </source>
</reference>
<proteinExistence type="evidence at protein level"/>
<sequence>MANEAYPCPCDIGHRLEYGGLGREVQVEHIKAYVTKSPVDAGKAVIVIQDIFGWQLPNTRYIADMISGNGYTTIVPDFFVGQEPWDPSGDWSIFPEWLKTRNAQKIDREISAILKYLKQQCHAQKIGIVGFCWGGTAVHHLMMKYSEFRAGVSVYGIVKDSEDIYNLKNPTLFIFAENDVVIPLKDVSLLTQKLKEHCKVEYQIKTFSGQTHGFVHRKREDCSPADKPYIDEARRNLIEWLNKYM</sequence>
<evidence type="ECO:0000250" key="1"/>
<evidence type="ECO:0000269" key="2">
    <source>
    </source>
</evidence>
<evidence type="ECO:0000269" key="3">
    <source ref="5"/>
</evidence>
<evidence type="ECO:0000305" key="4"/>
<evidence type="ECO:0007744" key="5">
    <source>
    </source>
</evidence>
<evidence type="ECO:0007744" key="6">
    <source>
    </source>
</evidence>
<organism>
    <name type="scientific">Homo sapiens</name>
    <name type="common">Human</name>
    <dbReference type="NCBI Taxonomy" id="9606"/>
    <lineage>
        <taxon>Eukaryota</taxon>
        <taxon>Metazoa</taxon>
        <taxon>Chordata</taxon>
        <taxon>Craniata</taxon>
        <taxon>Vertebrata</taxon>
        <taxon>Euteleostomi</taxon>
        <taxon>Mammalia</taxon>
        <taxon>Eutheria</taxon>
        <taxon>Euarchontoglires</taxon>
        <taxon>Primates</taxon>
        <taxon>Haplorrhini</taxon>
        <taxon>Catarrhini</taxon>
        <taxon>Hominidae</taxon>
        <taxon>Homo</taxon>
    </lineage>
</organism>
<keyword id="KW-0007">Acetylation</keyword>
<keyword id="KW-0963">Cytoplasm</keyword>
<keyword id="KW-0903">Direct protein sequencing</keyword>
<keyword id="KW-0378">Hydrolase</keyword>
<keyword id="KW-0597">Phosphoprotein</keyword>
<keyword id="KW-1267">Proteomics identification</keyword>
<keyword id="KW-1185">Reference proteome</keyword>
<dbReference type="EC" id="3.1.-.-"/>
<dbReference type="EMBL" id="AJ278125">
    <property type="protein sequence ID" value="CAC81950.1"/>
    <property type="molecule type" value="mRNA"/>
</dbReference>
<dbReference type="EMBL" id="AK074197">
    <property type="protein sequence ID" value="BAB85014.1"/>
    <property type="molecule type" value="mRNA"/>
</dbReference>
<dbReference type="EMBL" id="CH471102">
    <property type="protein sequence ID" value="EAX08070.1"/>
    <property type="molecule type" value="Genomic_DNA"/>
</dbReference>
<dbReference type="EMBL" id="CH471102">
    <property type="protein sequence ID" value="EAX08071.1"/>
    <property type="molecule type" value="Genomic_DNA"/>
</dbReference>
<dbReference type="EMBL" id="BC001573">
    <property type="protein sequence ID" value="AAH01573.1"/>
    <property type="molecule type" value="mRNA"/>
</dbReference>
<dbReference type="CCDS" id="CCDS3878.1"/>
<dbReference type="RefSeq" id="NP_620164.1">
    <property type="nucleotide sequence ID" value="NM_138809.4"/>
</dbReference>
<dbReference type="RefSeq" id="XP_016864523.1">
    <property type="nucleotide sequence ID" value="XM_017009034.1"/>
</dbReference>
<dbReference type="RefSeq" id="XP_016864524.1">
    <property type="nucleotide sequence ID" value="XM_017009035.1"/>
</dbReference>
<dbReference type="RefSeq" id="XP_047272670.1">
    <property type="nucleotide sequence ID" value="XM_047416714.1"/>
</dbReference>
<dbReference type="RefSeq" id="XP_047272671.1">
    <property type="nucleotide sequence ID" value="XM_047416715.1"/>
</dbReference>
<dbReference type="RefSeq" id="XP_047272672.1">
    <property type="nucleotide sequence ID" value="XM_047416716.1"/>
</dbReference>
<dbReference type="RefSeq" id="XP_047272673.1">
    <property type="nucleotide sequence ID" value="XM_047416717.1"/>
</dbReference>
<dbReference type="RefSeq" id="XP_047272674.1">
    <property type="nucleotide sequence ID" value="XM_047416718.1"/>
</dbReference>
<dbReference type="RefSeq" id="XP_054207588.1">
    <property type="nucleotide sequence ID" value="XM_054351613.1"/>
</dbReference>
<dbReference type="RefSeq" id="XP_054207589.1">
    <property type="nucleotide sequence ID" value="XM_054351614.1"/>
</dbReference>
<dbReference type="RefSeq" id="XP_054207590.1">
    <property type="nucleotide sequence ID" value="XM_054351615.1"/>
</dbReference>
<dbReference type="RefSeq" id="XP_054207591.1">
    <property type="nucleotide sequence ID" value="XM_054351616.1"/>
</dbReference>
<dbReference type="SMR" id="Q96DG6"/>
<dbReference type="BioGRID" id="126387">
    <property type="interactions" value="88"/>
</dbReference>
<dbReference type="FunCoup" id="Q96DG6">
    <property type="interactions" value="541"/>
</dbReference>
<dbReference type="IntAct" id="Q96DG6">
    <property type="interactions" value="42"/>
</dbReference>
<dbReference type="MINT" id="Q96DG6"/>
<dbReference type="STRING" id="9606.ENSP00000296658"/>
<dbReference type="ESTHER" id="human-CMBL">
    <property type="family name" value="CMBL"/>
</dbReference>
<dbReference type="CarbonylDB" id="Q96DG6"/>
<dbReference type="GlyGen" id="Q96DG6">
    <property type="glycosylation" value="1 site, 1 O-linked glycan (1 site)"/>
</dbReference>
<dbReference type="iPTMnet" id="Q96DG6"/>
<dbReference type="PhosphoSitePlus" id="Q96DG6"/>
<dbReference type="BioMuta" id="CMBL"/>
<dbReference type="DMDM" id="74731452"/>
<dbReference type="CPTAC" id="CPTAC-45"/>
<dbReference type="CPTAC" id="CPTAC-46"/>
<dbReference type="jPOST" id="Q96DG6"/>
<dbReference type="MassIVE" id="Q96DG6"/>
<dbReference type="PaxDb" id="9606-ENSP00000296658"/>
<dbReference type="PeptideAtlas" id="Q96DG6"/>
<dbReference type="ProteomicsDB" id="76287"/>
<dbReference type="Pumba" id="Q96DG6"/>
<dbReference type="Antibodypedia" id="22459">
    <property type="antibodies" value="123 antibodies from 20 providers"/>
</dbReference>
<dbReference type="DNASU" id="134147"/>
<dbReference type="Ensembl" id="ENST00000296658.4">
    <property type="protein sequence ID" value="ENSP00000296658.3"/>
    <property type="gene ID" value="ENSG00000164237.9"/>
</dbReference>
<dbReference type="GeneID" id="134147"/>
<dbReference type="KEGG" id="hsa:134147"/>
<dbReference type="MANE-Select" id="ENST00000296658.4">
    <property type="protein sequence ID" value="ENSP00000296658.3"/>
    <property type="RefSeq nucleotide sequence ID" value="NM_138809.4"/>
    <property type="RefSeq protein sequence ID" value="NP_620164.1"/>
</dbReference>
<dbReference type="UCSC" id="uc003jes.4">
    <property type="organism name" value="human"/>
</dbReference>
<dbReference type="AGR" id="HGNC:25090"/>
<dbReference type="CTD" id="134147"/>
<dbReference type="DisGeNET" id="134147"/>
<dbReference type="GeneCards" id="CMBL"/>
<dbReference type="HGNC" id="HGNC:25090">
    <property type="gene designation" value="CMBL"/>
</dbReference>
<dbReference type="HPA" id="ENSG00000164237">
    <property type="expression patterns" value="Tissue enhanced (kidney, liver, skeletal muscle)"/>
</dbReference>
<dbReference type="MIM" id="613379">
    <property type="type" value="gene"/>
</dbReference>
<dbReference type="neXtProt" id="NX_Q96DG6"/>
<dbReference type="OpenTargets" id="ENSG00000164237"/>
<dbReference type="PharmGKB" id="PA162382521"/>
<dbReference type="VEuPathDB" id="HostDB:ENSG00000164237"/>
<dbReference type="eggNOG" id="KOG3043">
    <property type="taxonomic scope" value="Eukaryota"/>
</dbReference>
<dbReference type="GeneTree" id="ENSGT00390000000183"/>
<dbReference type="HOGENOM" id="CLU_054590_8_2_1"/>
<dbReference type="InParanoid" id="Q96DG6"/>
<dbReference type="OMA" id="QCGAKHI"/>
<dbReference type="OrthoDB" id="17560at2759"/>
<dbReference type="PAN-GO" id="Q96DG6">
    <property type="GO annotations" value="0 GO annotations based on evolutionary models"/>
</dbReference>
<dbReference type="PhylomeDB" id="Q96DG6"/>
<dbReference type="TreeFam" id="TF331795"/>
<dbReference type="BRENDA" id="3.1.1.45">
    <property type="organism ID" value="2681"/>
</dbReference>
<dbReference type="PathwayCommons" id="Q96DG6"/>
<dbReference type="Reactome" id="R-HSA-211945">
    <property type="pathway name" value="Phase I - Functionalization of compounds"/>
</dbReference>
<dbReference type="SignaLink" id="Q96DG6"/>
<dbReference type="BioGRID-ORCS" id="134147">
    <property type="hits" value="15 hits in 1156 CRISPR screens"/>
</dbReference>
<dbReference type="ChiTaRS" id="CMBL">
    <property type="organism name" value="human"/>
</dbReference>
<dbReference type="GenomeRNAi" id="134147"/>
<dbReference type="Pharos" id="Q96DG6">
    <property type="development level" value="Tbio"/>
</dbReference>
<dbReference type="PRO" id="PR:Q96DG6"/>
<dbReference type="Proteomes" id="UP000005640">
    <property type="component" value="Chromosome 5"/>
</dbReference>
<dbReference type="RNAct" id="Q96DG6">
    <property type="molecule type" value="protein"/>
</dbReference>
<dbReference type="Bgee" id="ENSG00000164237">
    <property type="expression patterns" value="Expressed in kidney epithelium and 190 other cell types or tissues"/>
</dbReference>
<dbReference type="GO" id="GO:0005829">
    <property type="term" value="C:cytosol"/>
    <property type="evidence" value="ECO:0000304"/>
    <property type="project" value="Reactome"/>
</dbReference>
<dbReference type="GO" id="GO:0070062">
    <property type="term" value="C:extracellular exosome"/>
    <property type="evidence" value="ECO:0007005"/>
    <property type="project" value="UniProtKB"/>
</dbReference>
<dbReference type="GO" id="GO:0016787">
    <property type="term" value="F:hydrolase activity"/>
    <property type="evidence" value="ECO:0000304"/>
    <property type="project" value="Reactome"/>
</dbReference>
<dbReference type="GO" id="GO:0006805">
    <property type="term" value="P:xenobiotic metabolic process"/>
    <property type="evidence" value="ECO:0000304"/>
    <property type="project" value="Reactome"/>
</dbReference>
<dbReference type="FunFam" id="3.40.50.1820:FF:000178">
    <property type="entry name" value="Carboxymethylenebutenolidase homolog"/>
    <property type="match status" value="1"/>
</dbReference>
<dbReference type="Gene3D" id="3.40.50.1820">
    <property type="entry name" value="alpha/beta hydrolase"/>
    <property type="match status" value="1"/>
</dbReference>
<dbReference type="InterPro" id="IPR029058">
    <property type="entry name" value="AB_hydrolase_fold"/>
</dbReference>
<dbReference type="InterPro" id="IPR042946">
    <property type="entry name" value="CMBL"/>
</dbReference>
<dbReference type="InterPro" id="IPR002925">
    <property type="entry name" value="Dienelactn_hydro"/>
</dbReference>
<dbReference type="PANTHER" id="PTHR46812">
    <property type="entry name" value="CARBOXYMETHYLENEBUTENOLIDASE HOMOLOG"/>
    <property type="match status" value="1"/>
</dbReference>
<dbReference type="PANTHER" id="PTHR46812:SF1">
    <property type="entry name" value="CARBOXYMETHYLENEBUTENOLIDASE HOMOLOG"/>
    <property type="match status" value="1"/>
</dbReference>
<dbReference type="Pfam" id="PF01738">
    <property type="entry name" value="DLH"/>
    <property type="match status" value="1"/>
</dbReference>
<dbReference type="SUPFAM" id="SSF53474">
    <property type="entry name" value="alpha/beta-Hydrolases"/>
    <property type="match status" value="1"/>
</dbReference>
<protein>
    <recommendedName>
        <fullName>Carboxymethylenebutenolidase homolog</fullName>
        <ecNumber>3.1.-.-</ecNumber>
    </recommendedName>
</protein>
<gene>
    <name type="primary">CMBL</name>
</gene>
<name>CMBL_HUMAN</name>
<feature type="initiator methionine" description="Removed" evidence="3">
    <location>
        <position position="1"/>
    </location>
</feature>
<feature type="chain" id="PRO_0000308188" description="Carboxymethylenebutenolidase homolog">
    <location>
        <begin position="2"/>
        <end position="245"/>
    </location>
</feature>
<feature type="active site">
    <location>
        <position position="132"/>
    </location>
</feature>
<feature type="active site" evidence="1">
    <location>
        <position position="179"/>
    </location>
</feature>
<feature type="active site" evidence="1">
    <location>
        <position position="212"/>
    </location>
</feature>
<feature type="modified residue" description="N-acetylalanine" evidence="3">
    <location>
        <position position="2"/>
    </location>
</feature>
<feature type="modified residue" description="N6-acetyllysine" evidence="5">
    <location>
        <position position="36"/>
    </location>
</feature>
<feature type="modified residue" description="Phosphoserine" evidence="6">
    <location>
        <position position="223"/>
    </location>
</feature>
<feature type="sequence variant" id="VAR_036751" description="In dbSNP:rs35489000.">
    <original>Y</original>
    <variation>C</variation>
    <location>
        <position position="155"/>
    </location>
</feature>
<feature type="mutagenesis site" description="97% inhibition of enzymatic activity." evidence="2">
    <original>C</original>
    <variation>A</variation>
    <location>
        <position position="132"/>
    </location>
</feature>
<feature type="mutagenesis site" description="70% inhibition of enzymatic activity." evidence="2">
    <original>C</original>
    <variation>S</variation>
    <location>
        <position position="132"/>
    </location>
</feature>
<feature type="sequence conflict" description="In Ref. 2; BAB85014." evidence="4" ref="2">
    <original>K</original>
    <variation>N</variation>
    <location>
        <position position="99"/>
    </location>
</feature>
<feature type="sequence conflict" description="In Ref. 2; BAB85014." evidence="4" ref="2">
    <original>Q</original>
    <variation>H</variation>
    <location>
        <position position="104"/>
    </location>
</feature>
<comment type="function">
    <text evidence="2">Cysteine hydrolase. Can convert the prodrug olmesartan medoxomil into its pharmacologically active metabolite olmerstatan, an angiotensin receptor blocker, in liver and intestine. May also activate beta-lactam antibiotics faropenem medoxomil and lenampicillin.</text>
</comment>
<comment type="activity regulation">
    <text>Strongly inhibited by p-chloromercuribenzoate (PCMB). Partially inhibited by bis-p-nitrophenylphosphate (BNPP). Not inhibited by DFP, PMSF, eserine or EDTA.</text>
</comment>
<comment type="biophysicochemical properties">
    <kinetics>
        <KM evidence="2">170 uM for olmesartan medoxomil</KM>
        <KM evidence="2">283 uM for faropenem medoxomil</KM>
        <KM evidence="2">63.4 uM for lenampicillin</KM>
        <Vmax evidence="2">24.6 nmol/min/mg enzyme toward olmesartan medoxomil</Vmax>
        <Vmax evidence="2">16.4 nmol/min/mg enzyme toward faropenem medoxomil</Vmax>
        <Vmax evidence="2">4.0 nmol/min/mg enzyme toward lenampicillin</Vmax>
    </kinetics>
</comment>
<comment type="subcellular location">
    <subcellularLocation>
        <location evidence="2">Cytoplasm</location>
        <location evidence="2">Cytosol</location>
    </subcellularLocation>
</comment>
<comment type="tissue specificity">
    <text evidence="2">Widely expressed, with highest levels in liver, followed by kidney, small intestine and colon. Present in liver and intestine (at protein level).</text>
</comment>
<comment type="similarity">
    <text evidence="4">Belongs to the dienelactone hydrolase family.</text>
</comment>